<accession>Q3A2U7</accession>
<reference key="1">
    <citation type="submission" date="2005-10" db="EMBL/GenBank/DDBJ databases">
        <title>Complete sequence of Pelobacter carbinolicus DSM 2380.</title>
        <authorList>
            <person name="Copeland A."/>
            <person name="Lucas S."/>
            <person name="Lapidus A."/>
            <person name="Barry K."/>
            <person name="Detter J.C."/>
            <person name="Glavina T."/>
            <person name="Hammon N."/>
            <person name="Israni S."/>
            <person name="Pitluck S."/>
            <person name="Chertkov O."/>
            <person name="Schmutz J."/>
            <person name="Larimer F."/>
            <person name="Land M."/>
            <person name="Kyrpides N."/>
            <person name="Ivanova N."/>
            <person name="Richardson P."/>
        </authorList>
    </citation>
    <scope>NUCLEOTIDE SEQUENCE [LARGE SCALE GENOMIC DNA]</scope>
    <source>
        <strain>DSM 2380 / NBRC 103641 / GraBd1</strain>
    </source>
</reference>
<sequence>MDMITLFGLALALAMDAFAVALGCGLTLERLTGRHLFRLGWHFGLFQAMMPIIGWLAGLTVQKWIETYDHWVAFGLLVCVGGKMIHEAFQDEETRESRDDPTRGMSLIMLSVATSIDALAVGLSLAIVGISVWFPALIIGIIAGVMTVIGMLLGRRAGARWGQRVEIAGGLILIGIGLKILWEHTLGM</sequence>
<protein>
    <recommendedName>
        <fullName evidence="1">Putative manganese efflux pump MntP</fullName>
    </recommendedName>
</protein>
<evidence type="ECO:0000255" key="1">
    <source>
        <dbReference type="HAMAP-Rule" id="MF_01521"/>
    </source>
</evidence>
<keyword id="KW-0997">Cell inner membrane</keyword>
<keyword id="KW-1003">Cell membrane</keyword>
<keyword id="KW-0406">Ion transport</keyword>
<keyword id="KW-0464">Manganese</keyword>
<keyword id="KW-0472">Membrane</keyword>
<keyword id="KW-1185">Reference proteome</keyword>
<keyword id="KW-0812">Transmembrane</keyword>
<keyword id="KW-1133">Transmembrane helix</keyword>
<keyword id="KW-0813">Transport</keyword>
<organism>
    <name type="scientific">Syntrophotalea carbinolica (strain DSM 2380 / NBRC 103641 / GraBd1)</name>
    <name type="common">Pelobacter carbinolicus</name>
    <dbReference type="NCBI Taxonomy" id="338963"/>
    <lineage>
        <taxon>Bacteria</taxon>
        <taxon>Pseudomonadati</taxon>
        <taxon>Thermodesulfobacteriota</taxon>
        <taxon>Desulfuromonadia</taxon>
        <taxon>Desulfuromonadales</taxon>
        <taxon>Syntrophotaleaceae</taxon>
        <taxon>Syntrophotalea</taxon>
    </lineage>
</organism>
<name>MNTP_SYNC1</name>
<gene>
    <name evidence="1" type="primary">mntP</name>
    <name type="ordered locus">Pcar_2070</name>
</gene>
<dbReference type="EMBL" id="CP000142">
    <property type="protein sequence ID" value="ABA89310.1"/>
    <property type="molecule type" value="Genomic_DNA"/>
</dbReference>
<dbReference type="RefSeq" id="WP_011341822.1">
    <property type="nucleotide sequence ID" value="NC_007498.2"/>
</dbReference>
<dbReference type="KEGG" id="pca:Pcar_2070"/>
<dbReference type="eggNOG" id="COG1971">
    <property type="taxonomic scope" value="Bacteria"/>
</dbReference>
<dbReference type="HOGENOM" id="CLU_096410_3_0_7"/>
<dbReference type="OrthoDB" id="9811590at2"/>
<dbReference type="Proteomes" id="UP000002534">
    <property type="component" value="Chromosome"/>
</dbReference>
<dbReference type="GO" id="GO:0005886">
    <property type="term" value="C:plasma membrane"/>
    <property type="evidence" value="ECO:0007669"/>
    <property type="project" value="UniProtKB-SubCell"/>
</dbReference>
<dbReference type="GO" id="GO:0005384">
    <property type="term" value="F:manganese ion transmembrane transporter activity"/>
    <property type="evidence" value="ECO:0007669"/>
    <property type="project" value="UniProtKB-UniRule"/>
</dbReference>
<dbReference type="HAMAP" id="MF_01521">
    <property type="entry name" value="MntP_pump"/>
    <property type="match status" value="1"/>
</dbReference>
<dbReference type="InterPro" id="IPR003810">
    <property type="entry name" value="Mntp/YtaF"/>
</dbReference>
<dbReference type="InterPro" id="IPR022929">
    <property type="entry name" value="Put_MntP"/>
</dbReference>
<dbReference type="PANTHER" id="PTHR35529">
    <property type="entry name" value="MANGANESE EFFLUX PUMP MNTP-RELATED"/>
    <property type="match status" value="1"/>
</dbReference>
<dbReference type="PANTHER" id="PTHR35529:SF1">
    <property type="entry name" value="MANGANESE EFFLUX PUMP MNTP-RELATED"/>
    <property type="match status" value="1"/>
</dbReference>
<dbReference type="Pfam" id="PF02659">
    <property type="entry name" value="Mntp"/>
    <property type="match status" value="1"/>
</dbReference>
<feature type="chain" id="PRO_0000292537" description="Putative manganese efflux pump MntP">
    <location>
        <begin position="1"/>
        <end position="188"/>
    </location>
</feature>
<feature type="transmembrane region" description="Helical" evidence="1">
    <location>
        <begin position="3"/>
        <end position="23"/>
    </location>
</feature>
<feature type="transmembrane region" description="Helical" evidence="1">
    <location>
        <begin position="39"/>
        <end position="59"/>
    </location>
</feature>
<feature type="transmembrane region" description="Helical" evidence="1">
    <location>
        <begin position="65"/>
        <end position="85"/>
    </location>
</feature>
<feature type="transmembrane region" description="Helical" evidence="1">
    <location>
        <begin position="104"/>
        <end position="124"/>
    </location>
</feature>
<feature type="transmembrane region" description="Helical" evidence="1">
    <location>
        <begin position="125"/>
        <end position="145"/>
    </location>
</feature>
<feature type="transmembrane region" description="Helical" evidence="1">
    <location>
        <begin position="167"/>
        <end position="187"/>
    </location>
</feature>
<comment type="function">
    <text evidence="1">Probably functions as a manganese efflux pump.</text>
</comment>
<comment type="subcellular location">
    <subcellularLocation>
        <location evidence="1">Cell inner membrane</location>
        <topology evidence="1">Multi-pass membrane protein</topology>
    </subcellularLocation>
</comment>
<comment type="similarity">
    <text evidence="1">Belongs to the MntP (TC 9.B.29) family.</text>
</comment>
<proteinExistence type="inferred from homology"/>